<proteinExistence type="evidence at protein level"/>
<comment type="function">
    <text evidence="2">Catalyzes the conversion of dTMP to dTDP.</text>
</comment>
<comment type="catalytic activity">
    <reaction evidence="2">
        <text>dTMP + ATP = dTDP + ADP</text>
        <dbReference type="Rhea" id="RHEA:13517"/>
        <dbReference type="ChEBI" id="CHEBI:30616"/>
        <dbReference type="ChEBI" id="CHEBI:58369"/>
        <dbReference type="ChEBI" id="CHEBI:63528"/>
        <dbReference type="ChEBI" id="CHEBI:456216"/>
        <dbReference type="EC" id="2.7.4.9"/>
    </reaction>
    <physiologicalReaction direction="left-to-right" evidence="4">
        <dbReference type="Rhea" id="RHEA:13518"/>
    </physiologicalReaction>
</comment>
<comment type="pathway">
    <text evidence="4">Pyrimidine metabolism; dTTP biosynthesis.</text>
</comment>
<comment type="similarity">
    <text evidence="3">Belongs to the thymidylate kinase family.</text>
</comment>
<evidence type="ECO:0000255" key="1"/>
<evidence type="ECO:0000269" key="2">
    <source>
    </source>
</evidence>
<evidence type="ECO:0000305" key="3"/>
<evidence type="ECO:0000305" key="4">
    <source>
    </source>
</evidence>
<name>KTHY_SCHPO</name>
<keyword id="KW-0067">ATP-binding</keyword>
<keyword id="KW-0418">Kinase</keyword>
<keyword id="KW-0545">Nucleotide biosynthesis</keyword>
<keyword id="KW-0547">Nucleotide-binding</keyword>
<keyword id="KW-1185">Reference proteome</keyword>
<keyword id="KW-0808">Transferase</keyword>
<dbReference type="EC" id="2.7.4.9" evidence="2"/>
<dbReference type="EMBL" id="X65868">
    <property type="protein sequence ID" value="CAA46698.1"/>
    <property type="molecule type" value="mRNA"/>
</dbReference>
<dbReference type="EMBL" id="CU329672">
    <property type="protein sequence ID" value="CAA19357.1"/>
    <property type="molecule type" value="Genomic_DNA"/>
</dbReference>
<dbReference type="PIR" id="S28955">
    <property type="entry name" value="S28955"/>
</dbReference>
<dbReference type="PIR" id="T41553">
    <property type="entry name" value="T41553"/>
</dbReference>
<dbReference type="RefSeq" id="NP_588542.1">
    <property type="nucleotide sequence ID" value="NM_001023529.2"/>
</dbReference>
<dbReference type="SMR" id="P36590"/>
<dbReference type="BioGRID" id="275291">
    <property type="interactions" value="1"/>
</dbReference>
<dbReference type="FunCoup" id="P36590">
    <property type="interactions" value="451"/>
</dbReference>
<dbReference type="STRING" id="284812.P36590"/>
<dbReference type="PaxDb" id="4896-SPCC70.07c.1"/>
<dbReference type="EnsemblFungi" id="SPCC70.07c.1">
    <property type="protein sequence ID" value="SPCC70.07c.1:pep"/>
    <property type="gene ID" value="SPCC70.07c"/>
</dbReference>
<dbReference type="PomBase" id="SPCC70.07c">
    <property type="gene designation" value="tmp1"/>
</dbReference>
<dbReference type="VEuPathDB" id="FungiDB:SPCC70.07c"/>
<dbReference type="eggNOG" id="KOG3327">
    <property type="taxonomic scope" value="Eukaryota"/>
</dbReference>
<dbReference type="HOGENOM" id="CLU_049131_3_1_1"/>
<dbReference type="InParanoid" id="P36590"/>
<dbReference type="OMA" id="YWHQFDA"/>
<dbReference type="PhylomeDB" id="P36590"/>
<dbReference type="Reactome" id="R-SPO-499943">
    <property type="pathway name" value="Interconversion of nucleotide di- and triphosphates"/>
</dbReference>
<dbReference type="UniPathway" id="UPA00575"/>
<dbReference type="PRO" id="PR:P36590"/>
<dbReference type="Proteomes" id="UP000002485">
    <property type="component" value="Chromosome III"/>
</dbReference>
<dbReference type="GO" id="GO:0005737">
    <property type="term" value="C:cytoplasm"/>
    <property type="evidence" value="ECO:0000318"/>
    <property type="project" value="GO_Central"/>
</dbReference>
<dbReference type="GO" id="GO:0005829">
    <property type="term" value="C:cytosol"/>
    <property type="evidence" value="ECO:0007005"/>
    <property type="project" value="PomBase"/>
</dbReference>
<dbReference type="GO" id="GO:0005634">
    <property type="term" value="C:nucleus"/>
    <property type="evidence" value="ECO:0007005"/>
    <property type="project" value="PomBase"/>
</dbReference>
<dbReference type="GO" id="GO:0005524">
    <property type="term" value="F:ATP binding"/>
    <property type="evidence" value="ECO:0007669"/>
    <property type="project" value="UniProtKB-KW"/>
</dbReference>
<dbReference type="GO" id="GO:0004798">
    <property type="term" value="F:dTMP kinase activity"/>
    <property type="evidence" value="ECO:0000316"/>
    <property type="project" value="PomBase"/>
</dbReference>
<dbReference type="GO" id="GO:0004550">
    <property type="term" value="F:nucleoside diphosphate kinase activity"/>
    <property type="evidence" value="ECO:0000318"/>
    <property type="project" value="GO_Central"/>
</dbReference>
<dbReference type="GO" id="GO:0009041">
    <property type="term" value="F:UMP/dUMP kinase activity"/>
    <property type="evidence" value="ECO:0000316"/>
    <property type="project" value="PomBase"/>
</dbReference>
<dbReference type="GO" id="GO:0006233">
    <property type="term" value="P:dTDP biosynthetic process"/>
    <property type="evidence" value="ECO:0000316"/>
    <property type="project" value="PomBase"/>
</dbReference>
<dbReference type="GO" id="GO:0006235">
    <property type="term" value="P:dTTP biosynthetic process"/>
    <property type="evidence" value="ECO:0000316"/>
    <property type="project" value="PomBase"/>
</dbReference>
<dbReference type="GO" id="GO:0006227">
    <property type="term" value="P:dUDP biosynthetic process"/>
    <property type="evidence" value="ECO:0000316"/>
    <property type="project" value="PomBase"/>
</dbReference>
<dbReference type="CDD" id="cd01672">
    <property type="entry name" value="TMPK"/>
    <property type="match status" value="1"/>
</dbReference>
<dbReference type="FunFam" id="3.40.50.300:FF:000679">
    <property type="entry name" value="Thymidylate kinase"/>
    <property type="match status" value="1"/>
</dbReference>
<dbReference type="Gene3D" id="3.40.50.300">
    <property type="entry name" value="P-loop containing nucleotide triphosphate hydrolases"/>
    <property type="match status" value="1"/>
</dbReference>
<dbReference type="HAMAP" id="MF_00165">
    <property type="entry name" value="Thymidylate_kinase"/>
    <property type="match status" value="1"/>
</dbReference>
<dbReference type="InterPro" id="IPR027417">
    <property type="entry name" value="P-loop_NTPase"/>
</dbReference>
<dbReference type="InterPro" id="IPR039430">
    <property type="entry name" value="Thymidylate_kin-like_dom"/>
</dbReference>
<dbReference type="InterPro" id="IPR018095">
    <property type="entry name" value="Thymidylate_kin_CS"/>
</dbReference>
<dbReference type="InterPro" id="IPR018094">
    <property type="entry name" value="Thymidylate_kinase"/>
</dbReference>
<dbReference type="NCBIfam" id="TIGR00041">
    <property type="entry name" value="DTMP_kinase"/>
    <property type="match status" value="1"/>
</dbReference>
<dbReference type="PANTHER" id="PTHR10344">
    <property type="entry name" value="THYMIDYLATE KINASE"/>
    <property type="match status" value="1"/>
</dbReference>
<dbReference type="PANTHER" id="PTHR10344:SF1">
    <property type="entry name" value="THYMIDYLATE KINASE"/>
    <property type="match status" value="1"/>
</dbReference>
<dbReference type="Pfam" id="PF02223">
    <property type="entry name" value="Thymidylate_kin"/>
    <property type="match status" value="1"/>
</dbReference>
<dbReference type="SUPFAM" id="SSF52540">
    <property type="entry name" value="P-loop containing nucleoside triphosphate hydrolases"/>
    <property type="match status" value="1"/>
</dbReference>
<dbReference type="PROSITE" id="PS01331">
    <property type="entry name" value="THYMIDYLATE_KINASE"/>
    <property type="match status" value="1"/>
</dbReference>
<reference key="1">
    <citation type="journal article" date="1992" name="Biochim. Biophys. Acta">
        <title>Functional and structural conservation of Schizosaccharomyces pombe dTMP kinase gene.</title>
        <authorList>
            <person name="Abaigar L.T."/>
            <person name="Yeh Y.I."/>
            <person name="Jong A.Y."/>
        </authorList>
    </citation>
    <scope>NUCLEOTIDE SEQUENCE [MRNA]</scope>
    <scope>FUNCTION</scope>
    <scope>CATALYTIC ACTIVITY</scope>
    <scope>PATHWAY</scope>
</reference>
<reference key="2">
    <citation type="journal article" date="2002" name="Nature">
        <title>The genome sequence of Schizosaccharomyces pombe.</title>
        <authorList>
            <person name="Wood V."/>
            <person name="Gwilliam R."/>
            <person name="Rajandream M.A."/>
            <person name="Lyne M.H."/>
            <person name="Lyne R."/>
            <person name="Stewart A."/>
            <person name="Sgouros J.G."/>
            <person name="Peat N."/>
            <person name="Hayles J."/>
            <person name="Baker S.G."/>
            <person name="Basham D."/>
            <person name="Bowman S."/>
            <person name="Brooks K."/>
            <person name="Brown D."/>
            <person name="Brown S."/>
            <person name="Chillingworth T."/>
            <person name="Churcher C.M."/>
            <person name="Collins M."/>
            <person name="Connor R."/>
            <person name="Cronin A."/>
            <person name="Davis P."/>
            <person name="Feltwell T."/>
            <person name="Fraser A."/>
            <person name="Gentles S."/>
            <person name="Goble A."/>
            <person name="Hamlin N."/>
            <person name="Harris D.E."/>
            <person name="Hidalgo J."/>
            <person name="Hodgson G."/>
            <person name="Holroyd S."/>
            <person name="Hornsby T."/>
            <person name="Howarth S."/>
            <person name="Huckle E.J."/>
            <person name="Hunt S."/>
            <person name="Jagels K."/>
            <person name="James K.D."/>
            <person name="Jones L."/>
            <person name="Jones M."/>
            <person name="Leather S."/>
            <person name="McDonald S."/>
            <person name="McLean J."/>
            <person name="Mooney P."/>
            <person name="Moule S."/>
            <person name="Mungall K.L."/>
            <person name="Murphy L.D."/>
            <person name="Niblett D."/>
            <person name="Odell C."/>
            <person name="Oliver K."/>
            <person name="O'Neil S."/>
            <person name="Pearson D."/>
            <person name="Quail M.A."/>
            <person name="Rabbinowitsch E."/>
            <person name="Rutherford K.M."/>
            <person name="Rutter S."/>
            <person name="Saunders D."/>
            <person name="Seeger K."/>
            <person name="Sharp S."/>
            <person name="Skelton J."/>
            <person name="Simmonds M.N."/>
            <person name="Squares R."/>
            <person name="Squares S."/>
            <person name="Stevens K."/>
            <person name="Taylor K."/>
            <person name="Taylor R.G."/>
            <person name="Tivey A."/>
            <person name="Walsh S.V."/>
            <person name="Warren T."/>
            <person name="Whitehead S."/>
            <person name="Woodward J.R."/>
            <person name="Volckaert G."/>
            <person name="Aert R."/>
            <person name="Robben J."/>
            <person name="Grymonprez B."/>
            <person name="Weltjens I."/>
            <person name="Vanstreels E."/>
            <person name="Rieger M."/>
            <person name="Schaefer M."/>
            <person name="Mueller-Auer S."/>
            <person name="Gabel C."/>
            <person name="Fuchs M."/>
            <person name="Duesterhoeft A."/>
            <person name="Fritzc C."/>
            <person name="Holzer E."/>
            <person name="Moestl D."/>
            <person name="Hilbert H."/>
            <person name="Borzym K."/>
            <person name="Langer I."/>
            <person name="Beck A."/>
            <person name="Lehrach H."/>
            <person name="Reinhardt R."/>
            <person name="Pohl T.M."/>
            <person name="Eger P."/>
            <person name="Zimmermann W."/>
            <person name="Wedler H."/>
            <person name="Wambutt R."/>
            <person name="Purnelle B."/>
            <person name="Goffeau A."/>
            <person name="Cadieu E."/>
            <person name="Dreano S."/>
            <person name="Gloux S."/>
            <person name="Lelaure V."/>
            <person name="Mottier S."/>
            <person name="Galibert F."/>
            <person name="Aves S.J."/>
            <person name="Xiang Z."/>
            <person name="Hunt C."/>
            <person name="Moore K."/>
            <person name="Hurst S.M."/>
            <person name="Lucas M."/>
            <person name="Rochet M."/>
            <person name="Gaillardin C."/>
            <person name="Tallada V.A."/>
            <person name="Garzon A."/>
            <person name="Thode G."/>
            <person name="Daga R.R."/>
            <person name="Cruzado L."/>
            <person name="Jimenez J."/>
            <person name="Sanchez M."/>
            <person name="del Rey F."/>
            <person name="Benito J."/>
            <person name="Dominguez A."/>
            <person name="Revuelta J.L."/>
            <person name="Moreno S."/>
            <person name="Armstrong J."/>
            <person name="Forsburg S.L."/>
            <person name="Cerutti L."/>
            <person name="Lowe T."/>
            <person name="McCombie W.R."/>
            <person name="Paulsen I."/>
            <person name="Potashkin J."/>
            <person name="Shpakovski G.V."/>
            <person name="Ussery D."/>
            <person name="Barrell B.G."/>
            <person name="Nurse P."/>
        </authorList>
    </citation>
    <scope>NUCLEOTIDE SEQUENCE [LARGE SCALE GENOMIC DNA]</scope>
    <source>
        <strain>972 / ATCC 24843</strain>
    </source>
</reference>
<protein>
    <recommendedName>
        <fullName>Thymidylate kinase</fullName>
        <ecNumber evidence="2">2.7.4.9</ecNumber>
    </recommendedName>
    <alternativeName>
        <fullName>dTMP kinase</fullName>
    </alternativeName>
</protein>
<gene>
    <name type="primary">tmp1</name>
    <name type="synonym">tmp</name>
    <name type="ORF">SPCC70.07c</name>
</gene>
<sequence>MSKQNRGRLIVIEGLDRSGKSTQCQLLVDKLISQHEKAELFKFPDRTTAIGKKIDDYLKESVQLNDQVIHLLFSANRWETIQYIYEQINKGVTCILDRYAFSGIAFSAAKGLDWEWCKSPDRGLPRPDLVIFLNVDPRIAATRGQYGEERYEKIEMQEKVLKNFQRLQKEFREEGLEFITLDASSSLEDVHSQIVDLVSNVNIHETLDVL</sequence>
<feature type="chain" id="PRO_0000155213" description="Thymidylate kinase">
    <location>
        <begin position="1"/>
        <end position="210"/>
    </location>
</feature>
<feature type="binding site" evidence="1">
    <location>
        <begin position="14"/>
        <end position="21"/>
    </location>
    <ligand>
        <name>ATP</name>
        <dbReference type="ChEBI" id="CHEBI:30616"/>
    </ligand>
</feature>
<feature type="sequence conflict" description="In Ref. 1; CAA46698." evidence="3" ref="1">
    <original>SQHEKAE</original>
    <variation>LNMKRLK</variation>
    <location>
        <begin position="33"/>
        <end position="39"/>
    </location>
</feature>
<feature type="sequence conflict" description="In Ref. 1; CAA46698." evidence="3" ref="1">
    <original>K</original>
    <variation>T</variation>
    <location>
        <position position="59"/>
    </location>
</feature>
<feature type="sequence conflict" description="In Ref. 1." evidence="3" ref="1">
    <original>TIQYIYEQINKGVT</original>
    <variation>PSIYYRANQQRCN</variation>
    <location>
        <begin position="80"/>
        <end position="93"/>
    </location>
</feature>
<feature type="sequence conflict" description="In Ref. 1; CAA46698." evidence="3" ref="1">
    <original>P</original>
    <variation>T</variation>
    <location>
        <position position="125"/>
    </location>
</feature>
<feature type="sequence conflict" description="In Ref. 1; CAA46698." evidence="3" ref="1">
    <original>F</original>
    <variation>L</variation>
    <location>
        <position position="164"/>
    </location>
</feature>
<feature type="sequence conflict" description="In Ref. 1; CAA46698." evidence="3" ref="1">
    <original>S</original>
    <variation>YA</variation>
    <location>
        <position position="186"/>
    </location>
</feature>
<feature type="sequence conflict" description="In Ref. 1; CAA46698." evidence="3" ref="1">
    <original>H</original>
    <variation>D</variation>
    <location>
        <position position="191"/>
    </location>
</feature>
<accession>P36590</accession>
<accession>O74528</accession>
<organism>
    <name type="scientific">Schizosaccharomyces pombe (strain 972 / ATCC 24843)</name>
    <name type="common">Fission yeast</name>
    <dbReference type="NCBI Taxonomy" id="284812"/>
    <lineage>
        <taxon>Eukaryota</taxon>
        <taxon>Fungi</taxon>
        <taxon>Dikarya</taxon>
        <taxon>Ascomycota</taxon>
        <taxon>Taphrinomycotina</taxon>
        <taxon>Schizosaccharomycetes</taxon>
        <taxon>Schizosaccharomycetales</taxon>
        <taxon>Schizosaccharomycetaceae</taxon>
        <taxon>Schizosaccharomyces</taxon>
    </lineage>
</organism>